<reference key="1">
    <citation type="journal article" date="2006" name="PLoS Genet.">
        <title>Comparative genomics of emerging human ehrlichiosis agents.</title>
        <authorList>
            <person name="Dunning Hotopp J.C."/>
            <person name="Lin M."/>
            <person name="Madupu R."/>
            <person name="Crabtree J."/>
            <person name="Angiuoli S.V."/>
            <person name="Eisen J.A."/>
            <person name="Seshadri R."/>
            <person name="Ren Q."/>
            <person name="Wu M."/>
            <person name="Utterback T.R."/>
            <person name="Smith S."/>
            <person name="Lewis M."/>
            <person name="Khouri H."/>
            <person name="Zhang C."/>
            <person name="Niu H."/>
            <person name="Lin Q."/>
            <person name="Ohashi N."/>
            <person name="Zhi N."/>
            <person name="Nelson W.C."/>
            <person name="Brinkac L.M."/>
            <person name="Dodson R.J."/>
            <person name="Rosovitz M.J."/>
            <person name="Sundaram J.P."/>
            <person name="Daugherty S.C."/>
            <person name="Davidsen T."/>
            <person name="Durkin A.S."/>
            <person name="Gwinn M.L."/>
            <person name="Haft D.H."/>
            <person name="Selengut J.D."/>
            <person name="Sullivan S.A."/>
            <person name="Zafar N."/>
            <person name="Zhou L."/>
            <person name="Benahmed F."/>
            <person name="Forberger H."/>
            <person name="Halpin R."/>
            <person name="Mulligan S."/>
            <person name="Robinson J."/>
            <person name="White O."/>
            <person name="Rikihisa Y."/>
            <person name="Tettelin H."/>
        </authorList>
    </citation>
    <scope>NUCLEOTIDE SEQUENCE [LARGE SCALE GENOMIC DNA]</scope>
    <source>
        <strain>ATCC VR-367 / Miyayama</strain>
    </source>
</reference>
<keyword id="KW-0227">DNA damage</keyword>
<keyword id="KW-0233">DNA recombination</keyword>
<keyword id="KW-0234">DNA repair</keyword>
<keyword id="KW-0479">Metal-binding</keyword>
<keyword id="KW-0862">Zinc</keyword>
<keyword id="KW-0863">Zinc-finger</keyword>
<protein>
    <recommendedName>
        <fullName evidence="1">Recombination protein RecR</fullName>
    </recommendedName>
</protein>
<name>RECR_NEOSM</name>
<feature type="chain" id="PRO_0000322920" description="Recombination protein RecR">
    <location>
        <begin position="1"/>
        <end position="196"/>
    </location>
</feature>
<feature type="domain" description="Toprim" evidence="1">
    <location>
        <begin position="78"/>
        <end position="173"/>
    </location>
</feature>
<feature type="zinc finger region" description="C4-type" evidence="1">
    <location>
        <begin position="55"/>
        <end position="70"/>
    </location>
</feature>
<organism>
    <name type="scientific">Neorickettsia sennetsu (strain ATCC VR-367 / Miyayama)</name>
    <name type="common">Ehrlichia sennetsu</name>
    <dbReference type="NCBI Taxonomy" id="222891"/>
    <lineage>
        <taxon>Bacteria</taxon>
        <taxon>Pseudomonadati</taxon>
        <taxon>Pseudomonadota</taxon>
        <taxon>Alphaproteobacteria</taxon>
        <taxon>Rickettsiales</taxon>
        <taxon>Anaplasmataceae</taxon>
        <taxon>Neorickettsia</taxon>
    </lineage>
</organism>
<dbReference type="EMBL" id="CP000237">
    <property type="protein sequence ID" value="ABD46346.1"/>
    <property type="molecule type" value="Genomic_DNA"/>
</dbReference>
<dbReference type="RefSeq" id="WP_011452271.1">
    <property type="nucleotide sequence ID" value="NC_007798.1"/>
</dbReference>
<dbReference type="SMR" id="Q2GCN1"/>
<dbReference type="STRING" id="222891.NSE_0899"/>
<dbReference type="KEGG" id="nse:NSE_0899"/>
<dbReference type="eggNOG" id="COG0353">
    <property type="taxonomic scope" value="Bacteria"/>
</dbReference>
<dbReference type="HOGENOM" id="CLU_060739_1_1_5"/>
<dbReference type="OrthoDB" id="9802672at2"/>
<dbReference type="Proteomes" id="UP000001942">
    <property type="component" value="Chromosome"/>
</dbReference>
<dbReference type="GO" id="GO:0003677">
    <property type="term" value="F:DNA binding"/>
    <property type="evidence" value="ECO:0007669"/>
    <property type="project" value="UniProtKB-UniRule"/>
</dbReference>
<dbReference type="GO" id="GO:0008270">
    <property type="term" value="F:zinc ion binding"/>
    <property type="evidence" value="ECO:0007669"/>
    <property type="project" value="UniProtKB-KW"/>
</dbReference>
<dbReference type="GO" id="GO:0006310">
    <property type="term" value="P:DNA recombination"/>
    <property type="evidence" value="ECO:0007669"/>
    <property type="project" value="UniProtKB-UniRule"/>
</dbReference>
<dbReference type="GO" id="GO:0006281">
    <property type="term" value="P:DNA repair"/>
    <property type="evidence" value="ECO:0007669"/>
    <property type="project" value="UniProtKB-UniRule"/>
</dbReference>
<dbReference type="CDD" id="cd01025">
    <property type="entry name" value="TOPRIM_recR"/>
    <property type="match status" value="1"/>
</dbReference>
<dbReference type="Gene3D" id="3.40.1360.10">
    <property type="match status" value="1"/>
</dbReference>
<dbReference type="Gene3D" id="6.10.250.240">
    <property type="match status" value="1"/>
</dbReference>
<dbReference type="Gene3D" id="1.10.8.420">
    <property type="entry name" value="RecR Domain 1"/>
    <property type="match status" value="1"/>
</dbReference>
<dbReference type="HAMAP" id="MF_00017">
    <property type="entry name" value="RecR"/>
    <property type="match status" value="1"/>
</dbReference>
<dbReference type="InterPro" id="IPR000093">
    <property type="entry name" value="DNA_Rcmb_RecR"/>
</dbReference>
<dbReference type="InterPro" id="IPR023627">
    <property type="entry name" value="Rcmb_RecR"/>
</dbReference>
<dbReference type="InterPro" id="IPR015967">
    <property type="entry name" value="Rcmb_RecR_Znf"/>
</dbReference>
<dbReference type="InterPro" id="IPR006171">
    <property type="entry name" value="TOPRIM_dom"/>
</dbReference>
<dbReference type="InterPro" id="IPR034137">
    <property type="entry name" value="TOPRIM_RecR"/>
</dbReference>
<dbReference type="NCBIfam" id="TIGR00615">
    <property type="entry name" value="recR"/>
    <property type="match status" value="1"/>
</dbReference>
<dbReference type="PANTHER" id="PTHR30446">
    <property type="entry name" value="RECOMBINATION PROTEIN RECR"/>
    <property type="match status" value="1"/>
</dbReference>
<dbReference type="PANTHER" id="PTHR30446:SF0">
    <property type="entry name" value="RECOMBINATION PROTEIN RECR"/>
    <property type="match status" value="1"/>
</dbReference>
<dbReference type="Pfam" id="PF21175">
    <property type="entry name" value="RecR_C"/>
    <property type="match status" value="1"/>
</dbReference>
<dbReference type="Pfam" id="PF21176">
    <property type="entry name" value="RecR_HhH"/>
    <property type="match status" value="1"/>
</dbReference>
<dbReference type="Pfam" id="PF02132">
    <property type="entry name" value="RecR_ZnF"/>
    <property type="match status" value="1"/>
</dbReference>
<dbReference type="Pfam" id="PF13662">
    <property type="entry name" value="Toprim_4"/>
    <property type="match status" value="1"/>
</dbReference>
<dbReference type="SMART" id="SM00493">
    <property type="entry name" value="TOPRIM"/>
    <property type="match status" value="1"/>
</dbReference>
<dbReference type="SUPFAM" id="SSF111304">
    <property type="entry name" value="Recombination protein RecR"/>
    <property type="match status" value="1"/>
</dbReference>
<dbReference type="PROSITE" id="PS50880">
    <property type="entry name" value="TOPRIM"/>
    <property type="match status" value="1"/>
</dbReference>
<proteinExistence type="inferred from homology"/>
<sequence length="196" mass="21556">MDKKIKALIKLAENLPGLGPKSARRIVLHLLKSRETTLIRFIDTMQLLYETIKHCELCGNLESESPCSICRSTKRSSDIVCVVEEITDLWAIEKAGVHNGRYHVLNGALSIVDGITPETLQIEKLKRRVSSGAVKELIIATNATVEGQTTAQYIVEVLKGTQVKLSFLAHGIPVGSEMDYLDEGTLGIAFANRRAV</sequence>
<evidence type="ECO:0000255" key="1">
    <source>
        <dbReference type="HAMAP-Rule" id="MF_00017"/>
    </source>
</evidence>
<accession>Q2GCN1</accession>
<gene>
    <name evidence="1" type="primary">recR</name>
    <name type="ordered locus">NSE_0899</name>
</gene>
<comment type="function">
    <text evidence="1">May play a role in DNA repair. It seems to be involved in an RecBC-independent recombinational process of DNA repair. It may act with RecF and RecO.</text>
</comment>
<comment type="similarity">
    <text evidence="1">Belongs to the RecR family.</text>
</comment>